<keyword id="KW-0963">Cytoplasm</keyword>
<keyword id="KW-0378">Hydrolase</keyword>
<keyword id="KW-0479">Metal-binding</keyword>
<keyword id="KW-0547">Nucleotide-binding</keyword>
<organism>
    <name type="scientific">Salmonella paratyphi A (strain AKU_12601)</name>
    <dbReference type="NCBI Taxonomy" id="554290"/>
    <lineage>
        <taxon>Bacteria</taxon>
        <taxon>Pseudomonadati</taxon>
        <taxon>Pseudomonadota</taxon>
        <taxon>Gammaproteobacteria</taxon>
        <taxon>Enterobacterales</taxon>
        <taxon>Enterobacteriaceae</taxon>
        <taxon>Salmonella</taxon>
    </lineage>
</organism>
<feature type="chain" id="PRO_1000136977" description="5'-deoxynucleotidase YfbR">
    <location>
        <begin position="1"/>
        <end position="199"/>
    </location>
</feature>
<feature type="domain" description="HD" evidence="2">
    <location>
        <begin position="30"/>
        <end position="142"/>
    </location>
</feature>
<feature type="binding site" evidence="1">
    <location>
        <begin position="18"/>
        <end position="19"/>
    </location>
    <ligand>
        <name>substrate</name>
    </ligand>
</feature>
<feature type="binding site" evidence="1">
    <location>
        <position position="33"/>
    </location>
    <ligand>
        <name>a divalent metal cation</name>
        <dbReference type="ChEBI" id="CHEBI:60240"/>
    </ligand>
</feature>
<feature type="binding site" evidence="1">
    <location>
        <position position="33"/>
    </location>
    <ligand>
        <name>substrate</name>
    </ligand>
</feature>
<feature type="binding site" evidence="1">
    <location>
        <position position="68"/>
    </location>
    <ligand>
        <name>a divalent metal cation</name>
        <dbReference type="ChEBI" id="CHEBI:60240"/>
    </ligand>
</feature>
<feature type="binding site" evidence="1">
    <location>
        <position position="69"/>
    </location>
    <ligand>
        <name>a divalent metal cation</name>
        <dbReference type="ChEBI" id="CHEBI:60240"/>
    </ligand>
</feature>
<feature type="binding site" evidence="1">
    <location>
        <position position="69"/>
    </location>
    <ligand>
        <name>substrate</name>
    </ligand>
</feature>
<feature type="binding site" evidence="1">
    <location>
        <begin position="77"/>
        <end position="80"/>
    </location>
    <ligand>
        <name>substrate</name>
    </ligand>
</feature>
<feature type="binding site" evidence="1">
    <location>
        <position position="137"/>
    </location>
    <ligand>
        <name>a divalent metal cation</name>
        <dbReference type="ChEBI" id="CHEBI:60240"/>
    </ligand>
</feature>
<feature type="binding site" evidence="1">
    <location>
        <position position="137"/>
    </location>
    <ligand>
        <name>substrate</name>
    </ligand>
</feature>
<feature type="site" description="Appears to be important in orienting the phosphate for catalysis" evidence="1">
    <location>
        <position position="18"/>
    </location>
</feature>
<sequence>MKQSHFFAHLSRMKLINRWPLMRNVRTENVSEHSLQVAMVAHALAAIKNRKFGGQLNAERIALLAMYHDASEVLTGDLPTPVKYFNSQIAQEYKAIEKIAQQKLVDMAPDELRDIFAPLIDENAWSEEEQAIVKQADALCAYLKCLEELSAGNNEFGLAKTRLEKTLELRRSQEMDYFMAVFVPSFHLSLDEISQDSPL</sequence>
<reference key="1">
    <citation type="journal article" date="2009" name="BMC Genomics">
        <title>Pseudogene accumulation in the evolutionary histories of Salmonella enterica serovars Paratyphi A and Typhi.</title>
        <authorList>
            <person name="Holt K.E."/>
            <person name="Thomson N.R."/>
            <person name="Wain J."/>
            <person name="Langridge G.C."/>
            <person name="Hasan R."/>
            <person name="Bhutta Z.A."/>
            <person name="Quail M.A."/>
            <person name="Norbertczak H."/>
            <person name="Walker D."/>
            <person name="Simmonds M."/>
            <person name="White B."/>
            <person name="Bason N."/>
            <person name="Mungall K."/>
            <person name="Dougan G."/>
            <person name="Parkhill J."/>
        </authorList>
    </citation>
    <scope>NUCLEOTIDE SEQUENCE [LARGE SCALE GENOMIC DNA]</scope>
    <source>
        <strain>AKU_12601</strain>
    </source>
</reference>
<dbReference type="EC" id="3.1.3.89" evidence="1"/>
<dbReference type="EMBL" id="FM200053">
    <property type="protein sequence ID" value="CAR58625.1"/>
    <property type="molecule type" value="Genomic_DNA"/>
</dbReference>
<dbReference type="RefSeq" id="WP_000813882.1">
    <property type="nucleotide sequence ID" value="NC_011147.1"/>
</dbReference>
<dbReference type="SMR" id="B5BCL4"/>
<dbReference type="KEGG" id="sek:SSPA0496"/>
<dbReference type="HOGENOM" id="CLU_084784_0_0_6"/>
<dbReference type="Proteomes" id="UP000001869">
    <property type="component" value="Chromosome"/>
</dbReference>
<dbReference type="GO" id="GO:0005737">
    <property type="term" value="C:cytoplasm"/>
    <property type="evidence" value="ECO:0007669"/>
    <property type="project" value="UniProtKB-SubCell"/>
</dbReference>
<dbReference type="GO" id="GO:0002953">
    <property type="term" value="F:5'-deoxynucleotidase activity"/>
    <property type="evidence" value="ECO:0007669"/>
    <property type="project" value="UniProtKB-EC"/>
</dbReference>
<dbReference type="GO" id="GO:0046872">
    <property type="term" value="F:metal ion binding"/>
    <property type="evidence" value="ECO:0007669"/>
    <property type="project" value="UniProtKB-KW"/>
</dbReference>
<dbReference type="GO" id="GO:0000166">
    <property type="term" value="F:nucleotide binding"/>
    <property type="evidence" value="ECO:0007669"/>
    <property type="project" value="UniProtKB-KW"/>
</dbReference>
<dbReference type="FunFam" id="1.10.3210.10:FF:000002">
    <property type="entry name" value="Nucleotidase YfbR"/>
    <property type="match status" value="1"/>
</dbReference>
<dbReference type="Gene3D" id="1.10.3210.10">
    <property type="entry name" value="Hypothetical protein af1432"/>
    <property type="match status" value="1"/>
</dbReference>
<dbReference type="HAMAP" id="MF_01100">
    <property type="entry name" value="5DNU"/>
    <property type="match status" value="1"/>
</dbReference>
<dbReference type="InterPro" id="IPR003607">
    <property type="entry name" value="HD/PDEase_dom"/>
</dbReference>
<dbReference type="InterPro" id="IPR006674">
    <property type="entry name" value="HD_domain"/>
</dbReference>
<dbReference type="InterPro" id="IPR022971">
    <property type="entry name" value="YfbR"/>
</dbReference>
<dbReference type="InterPro" id="IPR039356">
    <property type="entry name" value="YfbR/HDDC2"/>
</dbReference>
<dbReference type="NCBIfam" id="NF003009">
    <property type="entry name" value="PRK03826.1"/>
    <property type="match status" value="1"/>
</dbReference>
<dbReference type="PANTHER" id="PTHR11845">
    <property type="entry name" value="5'-DEOXYNUCLEOTIDASE HDDC2"/>
    <property type="match status" value="1"/>
</dbReference>
<dbReference type="PANTHER" id="PTHR11845:SF13">
    <property type="entry name" value="5'-DEOXYNUCLEOTIDASE HDDC2"/>
    <property type="match status" value="1"/>
</dbReference>
<dbReference type="Pfam" id="PF12917">
    <property type="entry name" value="YfbR-like"/>
    <property type="match status" value="1"/>
</dbReference>
<dbReference type="SMART" id="SM00471">
    <property type="entry name" value="HDc"/>
    <property type="match status" value="1"/>
</dbReference>
<dbReference type="SUPFAM" id="SSF109604">
    <property type="entry name" value="HD-domain/PDEase-like"/>
    <property type="match status" value="1"/>
</dbReference>
<dbReference type="PROSITE" id="PS51831">
    <property type="entry name" value="HD"/>
    <property type="match status" value="1"/>
</dbReference>
<protein>
    <recommendedName>
        <fullName evidence="1">5'-deoxynucleotidase YfbR</fullName>
        <ecNumber evidence="1">3.1.3.89</ecNumber>
    </recommendedName>
    <alternativeName>
        <fullName evidence="1">5'-deoxyribonucleotidase</fullName>
    </alternativeName>
    <alternativeName>
        <fullName evidence="1">Nucleoside 5'-monophosphate phosphohydrolase</fullName>
    </alternativeName>
</protein>
<accession>B5BCL4</accession>
<comment type="function">
    <text evidence="1">Catalyzes the strictly specific dephosphorylation of 2'-deoxyribonucleoside 5'-monophosphates.</text>
</comment>
<comment type="catalytic activity">
    <reaction evidence="1">
        <text>a 2'-deoxyribonucleoside 5'-phosphate + H2O = a 2'-deoxyribonucleoside + phosphate</text>
        <dbReference type="Rhea" id="RHEA:36167"/>
        <dbReference type="ChEBI" id="CHEBI:15377"/>
        <dbReference type="ChEBI" id="CHEBI:18274"/>
        <dbReference type="ChEBI" id="CHEBI:43474"/>
        <dbReference type="ChEBI" id="CHEBI:65317"/>
        <dbReference type="EC" id="3.1.3.89"/>
    </reaction>
</comment>
<comment type="cofactor">
    <cofactor evidence="1">
        <name>a divalent metal cation</name>
        <dbReference type="ChEBI" id="CHEBI:60240"/>
    </cofactor>
</comment>
<comment type="subunit">
    <text evidence="1">Homodimer.</text>
</comment>
<comment type="subcellular location">
    <subcellularLocation>
        <location evidence="1">Cytoplasm</location>
    </subcellularLocation>
</comment>
<comment type="similarity">
    <text evidence="1">Belongs to the 5DNU family.</text>
</comment>
<gene>
    <name evidence="1" type="primary">yfbR</name>
    <name type="ordered locus">SSPA0496</name>
</gene>
<name>5DNU_SALPK</name>
<proteinExistence type="inferred from homology"/>
<evidence type="ECO:0000255" key="1">
    <source>
        <dbReference type="HAMAP-Rule" id="MF_01100"/>
    </source>
</evidence>
<evidence type="ECO:0000255" key="2">
    <source>
        <dbReference type="PROSITE-ProRule" id="PRU01175"/>
    </source>
</evidence>